<feature type="chain" id="PRO_0000227427" description="UvrABC system protein C">
    <location>
        <begin position="1"/>
        <end position="700"/>
    </location>
</feature>
<feature type="domain" description="GIY-YIG" evidence="1">
    <location>
        <begin position="11"/>
        <end position="90"/>
    </location>
</feature>
<feature type="domain" description="UVR" evidence="1">
    <location>
        <begin position="200"/>
        <end position="235"/>
    </location>
</feature>
<organism>
    <name type="scientific">Oleidesulfovibrio alaskensis (strain ATCC BAA-1058 / DSM 17464 / G20)</name>
    <name type="common">Desulfovibrio alaskensis</name>
    <dbReference type="NCBI Taxonomy" id="207559"/>
    <lineage>
        <taxon>Bacteria</taxon>
        <taxon>Pseudomonadati</taxon>
        <taxon>Thermodesulfobacteriota</taxon>
        <taxon>Desulfovibrionia</taxon>
        <taxon>Desulfovibrionales</taxon>
        <taxon>Desulfovibrionaceae</taxon>
        <taxon>Oleidesulfovibrio</taxon>
    </lineage>
</organism>
<sequence>MDQIDISCIPTTPGVYLYKDPAGKVVYVGKAKHLRRRVASYFRDIQRHTPKTRAMLRSAATVETLSTTTEKEALLLEASLIKKHRPRYNILLRDDKQYVLFQLTRKHHWPRLVLTRKVRKDGSAYFGPFTSGQAARQTWKVIHKVFPLRRCSDKAFRNRVRPCLYHFMNQCPGPCVLDVDRDGYMQMVRKVEMLLAGRSTELIDMLRADMQAASDALEFEEAALLRDQLQAVERTVERQAAVLPGVHDMDAVGLAEAGGGLALSVLFIRRSVLLDKRNFFWSGLTLEEGPEVLLSFLTQYYGPGSFIPPRILVPWDIRTEDREGAELAPAAVCTDAGLLPDTPLLPDCPEAAPLPAAPVFAVSAGDVMPSGHDADPAGTADAPVVRGDSAPEQPLPAAVPPLCAEESASGSALRAVAEMLTELRGGPVRVLPPRNATDNQLVTMATENAREDARAEKRPDVAGVIAAKLGMSAPPVRIEAVDVSHTGGSNTRVGVVVFENGTPARDQYRTYAFADDEAGGDDTGVLALWAVRRVHSGPPWPDLLLVDGGRGQLAAVMTALESAGAGGLFAVASIAKARNEETGRADRRAGNLADRIFLPGRSNPVNFKSGSPELLFLQHVRDTVHDYAIGRHRRARSGAALSGELQRMQGIGPATARLLWEHFSSLQEMVDAGEKGLAALPGIGKAKAAVIHEGLKRLVG</sequence>
<name>UVRC_OLEA2</name>
<dbReference type="EMBL" id="CP000112">
    <property type="protein sequence ID" value="ABB37815.1"/>
    <property type="molecule type" value="Genomic_DNA"/>
</dbReference>
<dbReference type="RefSeq" id="WP_011367052.1">
    <property type="nucleotide sequence ID" value="NC_007519.1"/>
</dbReference>
<dbReference type="SMR" id="Q313T1"/>
<dbReference type="STRING" id="207559.Dde_1014"/>
<dbReference type="KEGG" id="dde:Dde_1014"/>
<dbReference type="eggNOG" id="COG0322">
    <property type="taxonomic scope" value="Bacteria"/>
</dbReference>
<dbReference type="HOGENOM" id="CLU_014841_3_2_7"/>
<dbReference type="Proteomes" id="UP000002710">
    <property type="component" value="Chromosome"/>
</dbReference>
<dbReference type="GO" id="GO:0005737">
    <property type="term" value="C:cytoplasm"/>
    <property type="evidence" value="ECO:0007669"/>
    <property type="project" value="UniProtKB-SubCell"/>
</dbReference>
<dbReference type="GO" id="GO:0009380">
    <property type="term" value="C:excinuclease repair complex"/>
    <property type="evidence" value="ECO:0007669"/>
    <property type="project" value="InterPro"/>
</dbReference>
<dbReference type="GO" id="GO:0003677">
    <property type="term" value="F:DNA binding"/>
    <property type="evidence" value="ECO:0007669"/>
    <property type="project" value="UniProtKB-UniRule"/>
</dbReference>
<dbReference type="GO" id="GO:0009381">
    <property type="term" value="F:excinuclease ABC activity"/>
    <property type="evidence" value="ECO:0007669"/>
    <property type="project" value="UniProtKB-UniRule"/>
</dbReference>
<dbReference type="GO" id="GO:0006289">
    <property type="term" value="P:nucleotide-excision repair"/>
    <property type="evidence" value="ECO:0007669"/>
    <property type="project" value="UniProtKB-UniRule"/>
</dbReference>
<dbReference type="GO" id="GO:0009432">
    <property type="term" value="P:SOS response"/>
    <property type="evidence" value="ECO:0007669"/>
    <property type="project" value="UniProtKB-UniRule"/>
</dbReference>
<dbReference type="CDD" id="cd10434">
    <property type="entry name" value="GIY-YIG_UvrC_Cho"/>
    <property type="match status" value="1"/>
</dbReference>
<dbReference type="FunFam" id="3.40.1440.10:FF:000001">
    <property type="entry name" value="UvrABC system protein C"/>
    <property type="match status" value="1"/>
</dbReference>
<dbReference type="Gene3D" id="1.10.150.20">
    <property type="entry name" value="5' to 3' exonuclease, C-terminal subdomain"/>
    <property type="match status" value="1"/>
</dbReference>
<dbReference type="Gene3D" id="3.40.1440.10">
    <property type="entry name" value="GIY-YIG endonuclease"/>
    <property type="match status" value="1"/>
</dbReference>
<dbReference type="Gene3D" id="4.10.860.10">
    <property type="entry name" value="UVR domain"/>
    <property type="match status" value="1"/>
</dbReference>
<dbReference type="Gene3D" id="3.30.420.340">
    <property type="entry name" value="UvrC, RNAse H endonuclease domain"/>
    <property type="match status" value="1"/>
</dbReference>
<dbReference type="HAMAP" id="MF_00203">
    <property type="entry name" value="UvrC"/>
    <property type="match status" value="1"/>
</dbReference>
<dbReference type="InterPro" id="IPR000305">
    <property type="entry name" value="GIY-YIG_endonuc"/>
</dbReference>
<dbReference type="InterPro" id="IPR035901">
    <property type="entry name" value="GIY-YIG_endonuc_sf"/>
</dbReference>
<dbReference type="InterPro" id="IPR047296">
    <property type="entry name" value="GIY-YIG_UvrC_Cho"/>
</dbReference>
<dbReference type="InterPro" id="IPR003583">
    <property type="entry name" value="Hlx-hairpin-Hlx_DNA-bd_motif"/>
</dbReference>
<dbReference type="InterPro" id="IPR010994">
    <property type="entry name" value="RuvA_2-like"/>
</dbReference>
<dbReference type="InterPro" id="IPR001943">
    <property type="entry name" value="UVR_dom"/>
</dbReference>
<dbReference type="InterPro" id="IPR036876">
    <property type="entry name" value="UVR_dom_sf"/>
</dbReference>
<dbReference type="InterPro" id="IPR050066">
    <property type="entry name" value="UvrABC_protein_C"/>
</dbReference>
<dbReference type="InterPro" id="IPR004791">
    <property type="entry name" value="UvrC"/>
</dbReference>
<dbReference type="InterPro" id="IPR001162">
    <property type="entry name" value="UvrC_RNase_H_dom"/>
</dbReference>
<dbReference type="InterPro" id="IPR038476">
    <property type="entry name" value="UvrC_RNase_H_dom_sf"/>
</dbReference>
<dbReference type="NCBIfam" id="NF011260">
    <property type="entry name" value="PRK14666.1"/>
    <property type="match status" value="1"/>
</dbReference>
<dbReference type="NCBIfam" id="TIGR00194">
    <property type="entry name" value="uvrC"/>
    <property type="match status" value="1"/>
</dbReference>
<dbReference type="PANTHER" id="PTHR30562:SF1">
    <property type="entry name" value="UVRABC SYSTEM PROTEIN C"/>
    <property type="match status" value="1"/>
</dbReference>
<dbReference type="PANTHER" id="PTHR30562">
    <property type="entry name" value="UVRC/OXIDOREDUCTASE"/>
    <property type="match status" value="1"/>
</dbReference>
<dbReference type="Pfam" id="PF01541">
    <property type="entry name" value="GIY-YIG"/>
    <property type="match status" value="1"/>
</dbReference>
<dbReference type="Pfam" id="PF14520">
    <property type="entry name" value="HHH_5"/>
    <property type="match status" value="1"/>
</dbReference>
<dbReference type="Pfam" id="PF02151">
    <property type="entry name" value="UVR"/>
    <property type="match status" value="1"/>
</dbReference>
<dbReference type="Pfam" id="PF22920">
    <property type="entry name" value="UvrC_RNaseH"/>
    <property type="match status" value="1"/>
</dbReference>
<dbReference type="Pfam" id="PF08459">
    <property type="entry name" value="UvrC_RNaseH_dom"/>
    <property type="match status" value="1"/>
</dbReference>
<dbReference type="SMART" id="SM00465">
    <property type="entry name" value="GIYc"/>
    <property type="match status" value="1"/>
</dbReference>
<dbReference type="SMART" id="SM00278">
    <property type="entry name" value="HhH1"/>
    <property type="match status" value="2"/>
</dbReference>
<dbReference type="SUPFAM" id="SSF46600">
    <property type="entry name" value="C-terminal UvrC-binding domain of UvrB"/>
    <property type="match status" value="1"/>
</dbReference>
<dbReference type="SUPFAM" id="SSF82771">
    <property type="entry name" value="GIY-YIG endonuclease"/>
    <property type="match status" value="1"/>
</dbReference>
<dbReference type="SUPFAM" id="SSF47781">
    <property type="entry name" value="RuvA domain 2-like"/>
    <property type="match status" value="1"/>
</dbReference>
<dbReference type="PROSITE" id="PS50164">
    <property type="entry name" value="GIY_YIG"/>
    <property type="match status" value="1"/>
</dbReference>
<dbReference type="PROSITE" id="PS50151">
    <property type="entry name" value="UVR"/>
    <property type="match status" value="1"/>
</dbReference>
<dbReference type="PROSITE" id="PS50165">
    <property type="entry name" value="UVRC"/>
    <property type="match status" value="1"/>
</dbReference>
<proteinExistence type="inferred from homology"/>
<comment type="function">
    <text evidence="1">The UvrABC repair system catalyzes the recognition and processing of DNA lesions. UvrC both incises the 5' and 3' sides of the lesion. The N-terminal half is responsible for the 3' incision and the C-terminal half is responsible for the 5' incision.</text>
</comment>
<comment type="subunit">
    <text evidence="1">Interacts with UvrB in an incision complex.</text>
</comment>
<comment type="subcellular location">
    <subcellularLocation>
        <location evidence="1">Cytoplasm</location>
    </subcellularLocation>
</comment>
<comment type="similarity">
    <text evidence="1">Belongs to the UvrC family.</text>
</comment>
<accession>Q313T1</accession>
<protein>
    <recommendedName>
        <fullName evidence="1">UvrABC system protein C</fullName>
        <shortName evidence="1">Protein UvrC</shortName>
    </recommendedName>
    <alternativeName>
        <fullName evidence="1">Excinuclease ABC subunit C</fullName>
    </alternativeName>
</protein>
<evidence type="ECO:0000255" key="1">
    <source>
        <dbReference type="HAMAP-Rule" id="MF_00203"/>
    </source>
</evidence>
<gene>
    <name evidence="1" type="primary">uvrC</name>
    <name type="ordered locus">Dde_1014</name>
</gene>
<keyword id="KW-0963">Cytoplasm</keyword>
<keyword id="KW-0227">DNA damage</keyword>
<keyword id="KW-0228">DNA excision</keyword>
<keyword id="KW-0234">DNA repair</keyword>
<keyword id="KW-0267">Excision nuclease</keyword>
<keyword id="KW-1185">Reference proteome</keyword>
<keyword id="KW-0742">SOS response</keyword>
<reference key="1">
    <citation type="journal article" date="2011" name="J. Bacteriol.">
        <title>Complete genome sequence and updated annotation of Desulfovibrio alaskensis G20.</title>
        <authorList>
            <person name="Hauser L.J."/>
            <person name="Land M.L."/>
            <person name="Brown S.D."/>
            <person name="Larimer F."/>
            <person name="Keller K.L."/>
            <person name="Rapp-Giles B.J."/>
            <person name="Price M.N."/>
            <person name="Lin M."/>
            <person name="Bruce D.C."/>
            <person name="Detter J.C."/>
            <person name="Tapia R."/>
            <person name="Han C.S."/>
            <person name="Goodwin L.A."/>
            <person name="Cheng J.F."/>
            <person name="Pitluck S."/>
            <person name="Copeland A."/>
            <person name="Lucas S."/>
            <person name="Nolan M."/>
            <person name="Lapidus A.L."/>
            <person name="Palumbo A.V."/>
            <person name="Wall J.D."/>
        </authorList>
    </citation>
    <scope>NUCLEOTIDE SEQUENCE [LARGE SCALE GENOMIC DNA]</scope>
    <source>
        <strain>ATCC BAA-1058 / DSM 17464 / G20</strain>
    </source>
</reference>